<sequence length="448" mass="50236">MRENVVVSNMERESGKPVAVVAVVTEPWFTQRYREYLQRQKLFDTQHRVEKMPDGSVALPVLGETLPEQHLQELRNRVAPGSPCMLTQLPDPVPSKRAQGCSPAQKLCLEVSRWVEGRGVKWSAELEADLPRSWQRHGNLLLLSEDCFQAKQWKNLGPELWETVALALGVQRLAKRGRVSPDGTRTPAVTLLLGDHGWVEHVDNGIRYKFDVTQCMFSFGNITEKLRVASLSCAGEVLVDLYAGIGYFTLPFLVHAGAAFVHACEWNPHAVVALRNNLEINGVADRCQIHFGDNRKLKLSNIADRVILGLIPSSEEGWPIACQVLRQDAGGILHIHQNVESFPGKNLQALGVSKVEKEHWLYPQQITTNQWKNGATRDSRGKMLSPATKPEWQRWAESAETRIATLLQQVHGKPWKTQILHIQPVKSYAPHVDHIVLDLECCPCPSVG</sequence>
<dbReference type="EC" id="2.5.1.114"/>
<dbReference type="EMBL" id="AK000779">
    <property type="protein sequence ID" value="BAA91374.1"/>
    <property type="molecule type" value="mRNA"/>
</dbReference>
<dbReference type="EMBL" id="AK222727">
    <property type="protein sequence ID" value="BAD96447.1"/>
    <property type="molecule type" value="mRNA"/>
</dbReference>
<dbReference type="EMBL" id="BC003057">
    <property type="protein sequence ID" value="AAH03057.2"/>
    <property type="status" value="ALT_SEQ"/>
    <property type="molecule type" value="mRNA"/>
</dbReference>
<dbReference type="EMBL" id="BC011713">
    <property type="protein sequence ID" value="AAH11713.1"/>
    <property type="molecule type" value="mRNA"/>
</dbReference>
<dbReference type="CCDS" id="CCDS6349.1"/>
<dbReference type="RefSeq" id="NP_060426.2">
    <property type="nucleotide sequence ID" value="NM_017956.4"/>
</dbReference>
<dbReference type="SMR" id="Q53H54"/>
<dbReference type="BioGRID" id="120368">
    <property type="interactions" value="10"/>
</dbReference>
<dbReference type="FunCoup" id="Q53H54">
    <property type="interactions" value="752"/>
</dbReference>
<dbReference type="IntAct" id="Q53H54">
    <property type="interactions" value="8"/>
</dbReference>
<dbReference type="STRING" id="9606.ENSP00000329858"/>
<dbReference type="GlyCosmos" id="Q53H54">
    <property type="glycosylation" value="2 sites, 1 glycan"/>
</dbReference>
<dbReference type="GlyGen" id="Q53H54">
    <property type="glycosylation" value="3 sites, 1 O-linked glycan (3 sites)"/>
</dbReference>
<dbReference type="iPTMnet" id="Q53H54"/>
<dbReference type="PhosphoSitePlus" id="Q53H54"/>
<dbReference type="BioMuta" id="TRMT12"/>
<dbReference type="DMDM" id="74726289"/>
<dbReference type="jPOST" id="Q53H54"/>
<dbReference type="MassIVE" id="Q53H54"/>
<dbReference type="PaxDb" id="9606-ENSP00000329858"/>
<dbReference type="PeptideAtlas" id="Q53H54"/>
<dbReference type="ProteomicsDB" id="62495"/>
<dbReference type="Pumba" id="Q53H54"/>
<dbReference type="Antibodypedia" id="13906">
    <property type="antibodies" value="107 antibodies from 19 providers"/>
</dbReference>
<dbReference type="DNASU" id="55039"/>
<dbReference type="Ensembl" id="ENST00000328599.4">
    <property type="protein sequence ID" value="ENSP00000329858.3"/>
    <property type="gene ID" value="ENSG00000183665.5"/>
</dbReference>
<dbReference type="GeneID" id="55039"/>
<dbReference type="KEGG" id="hsa:55039"/>
<dbReference type="MANE-Select" id="ENST00000328599.4">
    <property type="protein sequence ID" value="ENSP00000329858.3"/>
    <property type="RefSeq nucleotide sequence ID" value="NM_017956.4"/>
    <property type="RefSeq protein sequence ID" value="NP_060426.2"/>
</dbReference>
<dbReference type="UCSC" id="uc003yra.5">
    <property type="organism name" value="human"/>
</dbReference>
<dbReference type="AGR" id="HGNC:26091"/>
<dbReference type="CTD" id="55039"/>
<dbReference type="DisGeNET" id="55039"/>
<dbReference type="GeneCards" id="TRMT12"/>
<dbReference type="HGNC" id="HGNC:26091">
    <property type="gene designation" value="TRMT12"/>
</dbReference>
<dbReference type="HPA" id="ENSG00000183665">
    <property type="expression patterns" value="Low tissue specificity"/>
</dbReference>
<dbReference type="MIM" id="611244">
    <property type="type" value="gene"/>
</dbReference>
<dbReference type="neXtProt" id="NX_Q53H54"/>
<dbReference type="OpenTargets" id="ENSG00000183665"/>
<dbReference type="PharmGKB" id="PA142670700"/>
<dbReference type="VEuPathDB" id="HostDB:ENSG00000183665"/>
<dbReference type="eggNOG" id="KOG1227">
    <property type="taxonomic scope" value="Eukaryota"/>
</dbReference>
<dbReference type="GeneTree" id="ENSGT00940000153304"/>
<dbReference type="HOGENOM" id="CLU_022610_1_0_1"/>
<dbReference type="InParanoid" id="Q53H54"/>
<dbReference type="OMA" id="EHSWVKH"/>
<dbReference type="OrthoDB" id="408788at2759"/>
<dbReference type="PAN-GO" id="Q53H54">
    <property type="GO annotations" value="3 GO annotations based on evolutionary models"/>
</dbReference>
<dbReference type="PhylomeDB" id="Q53H54"/>
<dbReference type="TreeFam" id="TF314137"/>
<dbReference type="BRENDA" id="2.5.1.114">
    <property type="organism ID" value="2681"/>
</dbReference>
<dbReference type="PathwayCommons" id="Q53H54"/>
<dbReference type="Reactome" id="R-HSA-6782861">
    <property type="pathway name" value="Synthesis of wybutosine at G37 of tRNA(Phe)"/>
</dbReference>
<dbReference type="SignaLink" id="Q53H54"/>
<dbReference type="UniPathway" id="UPA00375"/>
<dbReference type="BioGRID-ORCS" id="55039">
    <property type="hits" value="25 hits in 1154 CRISPR screens"/>
</dbReference>
<dbReference type="ChiTaRS" id="TRMT12">
    <property type="organism name" value="human"/>
</dbReference>
<dbReference type="GeneWiki" id="TRMT12"/>
<dbReference type="GenomeRNAi" id="55039"/>
<dbReference type="Pharos" id="Q53H54">
    <property type="development level" value="Tbio"/>
</dbReference>
<dbReference type="PRO" id="PR:Q53H54"/>
<dbReference type="Proteomes" id="UP000005640">
    <property type="component" value="Chromosome 8"/>
</dbReference>
<dbReference type="RNAct" id="Q53H54">
    <property type="molecule type" value="protein"/>
</dbReference>
<dbReference type="Bgee" id="ENSG00000183665">
    <property type="expression patterns" value="Expressed in sperm and 160 other cell types or tissues"/>
</dbReference>
<dbReference type="ExpressionAtlas" id="Q53H54">
    <property type="expression patterns" value="baseline and differential"/>
</dbReference>
<dbReference type="GO" id="GO:0005737">
    <property type="term" value="C:cytoplasm"/>
    <property type="evidence" value="ECO:0000318"/>
    <property type="project" value="GO_Central"/>
</dbReference>
<dbReference type="GO" id="GO:0102522">
    <property type="term" value="F:tRNA 4-demethylwyosine alpha-amino-alpha-carboxypropyltransferase activity"/>
    <property type="evidence" value="ECO:0007669"/>
    <property type="project" value="UniProtKB-EC"/>
</dbReference>
<dbReference type="GO" id="GO:0008175">
    <property type="term" value="F:tRNA methyltransferase activity"/>
    <property type="evidence" value="ECO:0000318"/>
    <property type="project" value="GO_Central"/>
</dbReference>
<dbReference type="GO" id="GO:0030488">
    <property type="term" value="P:tRNA methylation"/>
    <property type="evidence" value="ECO:0000318"/>
    <property type="project" value="GO_Central"/>
</dbReference>
<dbReference type="GO" id="GO:0031591">
    <property type="term" value="P:wybutosine biosynthetic process"/>
    <property type="evidence" value="ECO:0000318"/>
    <property type="project" value="GO_Central"/>
</dbReference>
<dbReference type="CDD" id="cd02440">
    <property type="entry name" value="AdoMet_MTases"/>
    <property type="match status" value="1"/>
</dbReference>
<dbReference type="FunFam" id="3.30.300.110:FF:000002">
    <property type="entry name" value="tRNA wybutosine-synthesizing protein 2 homolog"/>
    <property type="match status" value="1"/>
</dbReference>
<dbReference type="FunFam" id="3.40.50.150:FF:000201">
    <property type="entry name" value="tRNA wybutosine-synthesizing protein 2 homolog"/>
    <property type="match status" value="1"/>
</dbReference>
<dbReference type="Gene3D" id="3.30.300.110">
    <property type="entry name" value="Met-10+ protein-like domains"/>
    <property type="match status" value="1"/>
</dbReference>
<dbReference type="Gene3D" id="3.40.50.150">
    <property type="entry name" value="Vaccinia Virus protein VP39"/>
    <property type="match status" value="1"/>
</dbReference>
<dbReference type="InterPro" id="IPR030382">
    <property type="entry name" value="MeTrfase_TRM5/TYW2"/>
</dbReference>
<dbReference type="InterPro" id="IPR029063">
    <property type="entry name" value="SAM-dependent_MTases_sf"/>
</dbReference>
<dbReference type="InterPro" id="IPR056743">
    <property type="entry name" value="TRM5-TYW2-like_MTfase"/>
</dbReference>
<dbReference type="InterPro" id="IPR056744">
    <property type="entry name" value="TRM5/TYW2-like_N"/>
</dbReference>
<dbReference type="InterPro" id="IPR056745">
    <property type="entry name" value="TYW2_N"/>
</dbReference>
<dbReference type="PANTHER" id="PTHR23245">
    <property type="entry name" value="TRNA METHYLTRANSFERASE"/>
    <property type="match status" value="1"/>
</dbReference>
<dbReference type="PANTHER" id="PTHR23245:SF25">
    <property type="entry name" value="TRNA WYBUTOSINE-SYNTHESIZING PROTEIN 2 HOMOLOG"/>
    <property type="match status" value="1"/>
</dbReference>
<dbReference type="Pfam" id="PF02475">
    <property type="entry name" value="TRM5-TYW2_MTfase"/>
    <property type="match status" value="1"/>
</dbReference>
<dbReference type="Pfam" id="PF25132">
    <property type="entry name" value="TYW2_N"/>
    <property type="match status" value="1"/>
</dbReference>
<dbReference type="Pfam" id="PF25133">
    <property type="entry name" value="TYW2_N_2"/>
    <property type="match status" value="1"/>
</dbReference>
<dbReference type="SUPFAM" id="SSF53335">
    <property type="entry name" value="S-adenosyl-L-methionine-dependent methyltransferases"/>
    <property type="match status" value="1"/>
</dbReference>
<dbReference type="PROSITE" id="PS51684">
    <property type="entry name" value="SAM_MT_TRM5_TYW2"/>
    <property type="match status" value="1"/>
</dbReference>
<accession>Q53H54</accession>
<accession>Q6PKB9</accession>
<accession>Q96F21</accession>
<accession>Q9NWK6</accession>
<name>TYW2_HUMAN</name>
<feature type="chain" id="PRO_0000281836" description="tRNA wybutosine-synthesizing protein 2 homolog">
    <location>
        <begin position="1"/>
        <end position="448"/>
    </location>
</feature>
<feature type="binding site" evidence="1">
    <location>
        <position position="218"/>
    </location>
    <ligand>
        <name>S-adenosyl-L-methionine</name>
        <dbReference type="ChEBI" id="CHEBI:59789"/>
    </ligand>
</feature>
<feature type="binding site" evidence="1">
    <location>
        <position position="225"/>
    </location>
    <ligand>
        <name>S-adenosyl-L-methionine</name>
        <dbReference type="ChEBI" id="CHEBI:59789"/>
    </ligand>
</feature>
<feature type="binding site" evidence="1">
    <location>
        <position position="265"/>
    </location>
    <ligand>
        <name>S-adenosyl-L-methionine</name>
        <dbReference type="ChEBI" id="CHEBI:59789"/>
    </ligand>
</feature>
<feature type="binding site" evidence="1">
    <location>
        <begin position="293"/>
        <end position="294"/>
    </location>
    <ligand>
        <name>S-adenosyl-L-methionine</name>
        <dbReference type="ChEBI" id="CHEBI:59789"/>
    </ligand>
</feature>
<feature type="sequence variant" id="VAR_031291" description="In dbSNP:rs3812475." evidence="2">
    <original>W</original>
    <variation>R</variation>
    <location>
        <position position="28"/>
    </location>
</feature>
<feature type="mutagenesis site" description="Lack of activity." evidence="3">
    <original>K</original>
    <variation>A</variation>
    <location>
        <position position="225"/>
    </location>
</feature>
<feature type="mutagenesis site" description="Does not affect activity." evidence="3">
    <original>Y</original>
    <variation>A</variation>
    <location>
        <position position="242"/>
    </location>
</feature>
<feature type="mutagenesis site" description="Does not affect activity." evidence="3">
    <original>F</original>
    <variation>A</variation>
    <location>
        <position position="248"/>
    </location>
</feature>
<feature type="mutagenesis site" description="Lack of activity." evidence="3">
    <original>E</original>
    <variation>A</variation>
    <location>
        <position position="265"/>
    </location>
</feature>
<feature type="mutagenesis site" description="Does not affect activity." evidence="3">
    <original>D</original>
    <variation>A</variation>
    <location>
        <position position="293"/>
    </location>
</feature>
<feature type="sequence conflict" description="In Ref. 1; BAA91374." evidence="4" ref="1">
    <original>F</original>
    <variation>S</variation>
    <location>
        <position position="342"/>
    </location>
</feature>
<protein>
    <recommendedName>
        <fullName>tRNA wybutosine-synthesizing protein 2 homolog</fullName>
        <shortName>tRNA-yW-synthesizing protein 2</shortName>
        <ecNumber>2.5.1.114</ecNumber>
    </recommendedName>
    <alternativeName>
        <fullName>tRNA(Phe) (4-demethylwyosine(37)-C(7)) aminocarboxypropyltransferase</fullName>
    </alternativeName>
</protein>
<reference key="1">
    <citation type="journal article" date="2004" name="Nat. Genet.">
        <title>Complete sequencing and characterization of 21,243 full-length human cDNAs.</title>
        <authorList>
            <person name="Ota T."/>
            <person name="Suzuki Y."/>
            <person name="Nishikawa T."/>
            <person name="Otsuki T."/>
            <person name="Sugiyama T."/>
            <person name="Irie R."/>
            <person name="Wakamatsu A."/>
            <person name="Hayashi K."/>
            <person name="Sato H."/>
            <person name="Nagai K."/>
            <person name="Kimura K."/>
            <person name="Makita H."/>
            <person name="Sekine M."/>
            <person name="Obayashi M."/>
            <person name="Nishi T."/>
            <person name="Shibahara T."/>
            <person name="Tanaka T."/>
            <person name="Ishii S."/>
            <person name="Yamamoto J."/>
            <person name="Saito K."/>
            <person name="Kawai Y."/>
            <person name="Isono Y."/>
            <person name="Nakamura Y."/>
            <person name="Nagahari K."/>
            <person name="Murakami K."/>
            <person name="Yasuda T."/>
            <person name="Iwayanagi T."/>
            <person name="Wagatsuma M."/>
            <person name="Shiratori A."/>
            <person name="Sudo H."/>
            <person name="Hosoiri T."/>
            <person name="Kaku Y."/>
            <person name="Kodaira H."/>
            <person name="Kondo H."/>
            <person name="Sugawara M."/>
            <person name="Takahashi M."/>
            <person name="Kanda K."/>
            <person name="Yokoi T."/>
            <person name="Furuya T."/>
            <person name="Kikkawa E."/>
            <person name="Omura Y."/>
            <person name="Abe K."/>
            <person name="Kamihara K."/>
            <person name="Katsuta N."/>
            <person name="Sato K."/>
            <person name="Tanikawa M."/>
            <person name="Yamazaki M."/>
            <person name="Ninomiya K."/>
            <person name="Ishibashi T."/>
            <person name="Yamashita H."/>
            <person name="Murakawa K."/>
            <person name="Fujimori K."/>
            <person name="Tanai H."/>
            <person name="Kimata M."/>
            <person name="Watanabe M."/>
            <person name="Hiraoka S."/>
            <person name="Chiba Y."/>
            <person name="Ishida S."/>
            <person name="Ono Y."/>
            <person name="Takiguchi S."/>
            <person name="Watanabe S."/>
            <person name="Yosida M."/>
            <person name="Hotuta T."/>
            <person name="Kusano J."/>
            <person name="Kanehori K."/>
            <person name="Takahashi-Fujii A."/>
            <person name="Hara H."/>
            <person name="Tanase T.-O."/>
            <person name="Nomura Y."/>
            <person name="Togiya S."/>
            <person name="Komai F."/>
            <person name="Hara R."/>
            <person name="Takeuchi K."/>
            <person name="Arita M."/>
            <person name="Imose N."/>
            <person name="Musashino K."/>
            <person name="Yuuki H."/>
            <person name="Oshima A."/>
            <person name="Sasaki N."/>
            <person name="Aotsuka S."/>
            <person name="Yoshikawa Y."/>
            <person name="Matsunawa H."/>
            <person name="Ichihara T."/>
            <person name="Shiohata N."/>
            <person name="Sano S."/>
            <person name="Moriya S."/>
            <person name="Momiyama H."/>
            <person name="Satoh N."/>
            <person name="Takami S."/>
            <person name="Terashima Y."/>
            <person name="Suzuki O."/>
            <person name="Nakagawa S."/>
            <person name="Senoh A."/>
            <person name="Mizoguchi H."/>
            <person name="Goto Y."/>
            <person name="Shimizu F."/>
            <person name="Wakebe H."/>
            <person name="Hishigaki H."/>
            <person name="Watanabe T."/>
            <person name="Sugiyama A."/>
            <person name="Takemoto M."/>
            <person name="Kawakami B."/>
            <person name="Yamazaki M."/>
            <person name="Watanabe K."/>
            <person name="Kumagai A."/>
            <person name="Itakura S."/>
            <person name="Fukuzumi Y."/>
            <person name="Fujimori Y."/>
            <person name="Komiyama M."/>
            <person name="Tashiro H."/>
            <person name="Tanigami A."/>
            <person name="Fujiwara T."/>
            <person name="Ono T."/>
            <person name="Yamada K."/>
            <person name="Fujii Y."/>
            <person name="Ozaki K."/>
            <person name="Hirao M."/>
            <person name="Ohmori Y."/>
            <person name="Kawabata A."/>
            <person name="Hikiji T."/>
            <person name="Kobatake N."/>
            <person name="Inagaki H."/>
            <person name="Ikema Y."/>
            <person name="Okamoto S."/>
            <person name="Okitani R."/>
            <person name="Kawakami T."/>
            <person name="Noguchi S."/>
            <person name="Itoh T."/>
            <person name="Shigeta K."/>
            <person name="Senba T."/>
            <person name="Matsumura K."/>
            <person name="Nakajima Y."/>
            <person name="Mizuno T."/>
            <person name="Morinaga M."/>
            <person name="Sasaki M."/>
            <person name="Togashi T."/>
            <person name="Oyama M."/>
            <person name="Hata H."/>
            <person name="Watanabe M."/>
            <person name="Komatsu T."/>
            <person name="Mizushima-Sugano J."/>
            <person name="Satoh T."/>
            <person name="Shirai Y."/>
            <person name="Takahashi Y."/>
            <person name="Nakagawa K."/>
            <person name="Okumura K."/>
            <person name="Nagase T."/>
            <person name="Nomura N."/>
            <person name="Kikuchi H."/>
            <person name="Masuho Y."/>
            <person name="Yamashita R."/>
            <person name="Nakai K."/>
            <person name="Yada T."/>
            <person name="Nakamura Y."/>
            <person name="Ohara O."/>
            <person name="Isogai T."/>
            <person name="Sugano S."/>
        </authorList>
    </citation>
    <scope>NUCLEOTIDE SEQUENCE [LARGE SCALE MRNA]</scope>
    <source>
        <tissue>Colon</tissue>
    </source>
</reference>
<reference key="2">
    <citation type="submission" date="2005-04" db="EMBL/GenBank/DDBJ databases">
        <authorList>
            <person name="Suzuki Y."/>
            <person name="Sugano S."/>
            <person name="Totoki Y."/>
            <person name="Toyoda A."/>
            <person name="Takeda T."/>
            <person name="Sakaki Y."/>
            <person name="Tanaka A."/>
            <person name="Yokoyama S."/>
        </authorList>
    </citation>
    <scope>NUCLEOTIDE SEQUENCE [LARGE SCALE MRNA]</scope>
    <source>
        <tissue>Colon</tissue>
    </source>
</reference>
<reference key="3">
    <citation type="journal article" date="2004" name="Genome Res.">
        <title>The status, quality, and expansion of the NIH full-length cDNA project: the Mammalian Gene Collection (MGC).</title>
        <authorList>
            <consortium name="The MGC Project Team"/>
        </authorList>
    </citation>
    <scope>NUCLEOTIDE SEQUENCE [LARGE SCALE MRNA]</scope>
    <scope>VARIANT ARG-28</scope>
    <source>
        <tissue>Ovary</tissue>
        <tissue>Skin</tissue>
    </source>
</reference>
<reference key="4">
    <citation type="journal article" date="2012" name="PLoS ONE">
        <title>Structure-function analysis of human TYW2 enzyme required for the biosynthesis of a highly modified Wybutosine (yW) base in phenylalanine-tRNA.</title>
        <authorList>
            <person name="Rodriguez V."/>
            <person name="Vasudevan S."/>
            <person name="Noma A."/>
            <person name="Carlson B.A."/>
            <person name="Green J.E."/>
            <person name="Suzuki T."/>
            <person name="Chandrasekharappa S.C."/>
        </authorList>
    </citation>
    <scope>FUNCTION</scope>
    <scope>CATALYTIC ACTIVITY</scope>
    <scope>PATHWAY</scope>
    <scope>MUTAGENESIS OF LYS-225; TYR-242; PHE-248; GLU-265 AND ASP-293</scope>
</reference>
<comment type="function">
    <text evidence="3">S-adenosyl-L-methionine-dependent transferase that acts as a component of the wybutosine biosynthesis pathway. Wybutosine is a hyper modified guanosine with a tricyclic base found at the 3'-position adjacent to the anticodon of eukaryotic phenylalanine tRNA. Catalyzes the transfer of the alpha-amino-alpha-carboxypropyl (acp) group from S-adenosyl-L-methionine to the C-7 position of 4-demethylwyosine (imG-14) to produce wybutosine-86.</text>
</comment>
<comment type="catalytic activity">
    <reaction evidence="3">
        <text>4-demethylwyosine(37) in tRNA(Phe) + S-adenosyl-L-methionine = 4-demethyl-7-[(3S)-3-amino-3-carboxypropyl]wyosine(37) in tRNA(Phe) + S-methyl-5'-thioadenosine + H(+)</text>
        <dbReference type="Rhea" id="RHEA:36355"/>
        <dbReference type="Rhea" id="RHEA-COMP:10164"/>
        <dbReference type="Rhea" id="RHEA-COMP:10378"/>
        <dbReference type="ChEBI" id="CHEBI:15378"/>
        <dbReference type="ChEBI" id="CHEBI:17509"/>
        <dbReference type="ChEBI" id="CHEBI:59789"/>
        <dbReference type="ChEBI" id="CHEBI:64315"/>
        <dbReference type="ChEBI" id="CHEBI:73550"/>
        <dbReference type="EC" id="2.5.1.114"/>
    </reaction>
</comment>
<comment type="pathway">
    <text evidence="3">tRNA modification; wybutosine-tRNA(Phe) biosynthesis.</text>
</comment>
<comment type="interaction">
    <interactant intactId="EBI-10242598">
        <id>Q53H54</id>
    </interactant>
    <interactant intactId="EBI-739832">
        <id>Q8TBB1</id>
        <label>LNX1</label>
    </interactant>
    <organismsDiffer>false</organismsDiffer>
    <experiments>3</experiments>
</comment>
<comment type="interaction">
    <interactant intactId="EBI-10242598">
        <id>Q53H54</id>
    </interactant>
    <interactant intactId="EBI-12380931">
        <id>P36639-2</id>
        <label>NUDT1</label>
    </interactant>
    <organismsDiffer>false</organismsDiffer>
    <experiments>3</experiments>
</comment>
<comment type="interaction">
    <interactant intactId="EBI-10242598">
        <id>Q53H54</id>
    </interactant>
    <interactant intactId="EBI-11320284">
        <id>Q9NQX0</id>
        <label>PRDM6</label>
    </interactant>
    <organismsDiffer>false</organismsDiffer>
    <experiments>3</experiments>
</comment>
<comment type="similarity">
    <text evidence="1">Belongs to the class I-like SAM-binding methyltransferase superfamily. TRM5/TYW2 family.</text>
</comment>
<comment type="sequence caution" evidence="4">
    <conflict type="erroneous initiation">
        <sequence resource="EMBL-CDS" id="AAH03057"/>
    </conflict>
    <text>Extended N-terminus.</text>
</comment>
<comment type="sequence caution" evidence="4">
    <conflict type="miscellaneous discrepancy">
        <sequence resource="EMBL-CDS" id="AAH03057"/>
    </conflict>
    <text>Contaminating sequence. Potential poly-A sequence starting in position 371.</text>
</comment>
<gene>
    <name type="primary">TRMT12</name>
    <name type="synonym">TRM12</name>
    <name type="synonym">TYW2</name>
</gene>
<organism>
    <name type="scientific">Homo sapiens</name>
    <name type="common">Human</name>
    <dbReference type="NCBI Taxonomy" id="9606"/>
    <lineage>
        <taxon>Eukaryota</taxon>
        <taxon>Metazoa</taxon>
        <taxon>Chordata</taxon>
        <taxon>Craniata</taxon>
        <taxon>Vertebrata</taxon>
        <taxon>Euteleostomi</taxon>
        <taxon>Mammalia</taxon>
        <taxon>Eutheria</taxon>
        <taxon>Euarchontoglires</taxon>
        <taxon>Primates</taxon>
        <taxon>Haplorrhini</taxon>
        <taxon>Catarrhini</taxon>
        <taxon>Hominidae</taxon>
        <taxon>Homo</taxon>
    </lineage>
</organism>
<proteinExistence type="evidence at protein level"/>
<evidence type="ECO:0000255" key="1">
    <source>
        <dbReference type="PROSITE-ProRule" id="PRU01021"/>
    </source>
</evidence>
<evidence type="ECO:0000269" key="2">
    <source>
    </source>
</evidence>
<evidence type="ECO:0000269" key="3">
    <source>
    </source>
</evidence>
<evidence type="ECO:0000305" key="4"/>
<keyword id="KW-1267">Proteomics identification</keyword>
<keyword id="KW-1185">Reference proteome</keyword>
<keyword id="KW-0949">S-adenosyl-L-methionine</keyword>
<keyword id="KW-0808">Transferase</keyword>
<keyword id="KW-0819">tRNA processing</keyword>